<name>PAGP_MUSP7</name>
<comment type="function">
    <text evidence="1">Transfers a fatty acid residue from the sn-1 position of a phospholipid to the N-linked hydroxyfatty acid chain on the proximal unit of lipid A or its precursors.</text>
</comment>
<comment type="catalytic activity">
    <reaction evidence="1">
        <text>a lipid A + a 1,2-diacyl-sn-glycero-3-phosphocholine = a hepta-acyl lipid A + a 2-acyl-sn-glycero-3-phosphocholine</text>
        <dbReference type="Rhea" id="RHEA:74275"/>
        <dbReference type="ChEBI" id="CHEBI:57643"/>
        <dbReference type="ChEBI" id="CHEBI:57875"/>
        <dbReference type="ChEBI" id="CHEBI:193141"/>
        <dbReference type="ChEBI" id="CHEBI:193142"/>
        <dbReference type="EC" id="2.3.1.251"/>
    </reaction>
</comment>
<comment type="catalytic activity">
    <reaction evidence="1">
        <text>a lipid IVA + a 1,2-diacyl-sn-glycero-3-phosphocholine = a lipid IVB + a 2-acyl-sn-glycero-3-phosphocholine</text>
        <dbReference type="Rhea" id="RHEA:74279"/>
        <dbReference type="ChEBI" id="CHEBI:57643"/>
        <dbReference type="ChEBI" id="CHEBI:57875"/>
        <dbReference type="ChEBI" id="CHEBI:176425"/>
        <dbReference type="ChEBI" id="CHEBI:193143"/>
        <dbReference type="EC" id="2.3.1.251"/>
    </reaction>
</comment>
<comment type="catalytic activity">
    <reaction evidence="1">
        <text>a lipid IIA + a 1,2-diacyl-sn-glycero-3-phosphocholine = a lipid IIB + a 2-acyl-sn-glycero-3-phosphocholine</text>
        <dbReference type="Rhea" id="RHEA:74283"/>
        <dbReference type="ChEBI" id="CHEBI:57643"/>
        <dbReference type="ChEBI" id="CHEBI:57875"/>
        <dbReference type="ChEBI" id="CHEBI:193144"/>
        <dbReference type="ChEBI" id="CHEBI:193145"/>
        <dbReference type="EC" id="2.3.1.251"/>
    </reaction>
</comment>
<comment type="subunit">
    <text evidence="1">Homodimer.</text>
</comment>
<comment type="subcellular location">
    <subcellularLocation>
        <location evidence="1">Cell outer membrane</location>
    </subcellularLocation>
</comment>
<comment type="similarity">
    <text evidence="1">Belongs to the lipid A palmitoyltransferase family.</text>
</comment>
<comment type="sequence caution" evidence="2">
    <conflict type="erroneous initiation">
        <sequence resource="EMBL-CDS" id="ACS84000"/>
    </conflict>
    <text>Truncated N-terminus.</text>
</comment>
<sequence>MWLRFCAPALMAWYWVFFPSTSQAATMENDGQDGFWQRAKNNLSETWHNGQSQDLYVPAMTWHNRWTYSRQKIDKYNERPWGAGYGVSRLDSDGDWHGIYLMAFKDSFNKWEPIGGYGYEKRWKPVAGNDDFQLGLGFTAGVTMRDNWNYIPIPVLLPLASINYQRLSFQMTYIPGTHNNGNVYFAWLRWQL</sequence>
<keyword id="KW-0012">Acyltransferase</keyword>
<keyword id="KW-0998">Cell outer membrane</keyword>
<keyword id="KW-0472">Membrane</keyword>
<keyword id="KW-0732">Signal</keyword>
<keyword id="KW-0808">Transferase</keyword>
<organism>
    <name type="scientific">Musicola paradisiaca (strain Ech703)</name>
    <name type="common">Dickeya paradisiaca</name>
    <name type="synonym">Dickeya dadantii</name>
    <dbReference type="NCBI Taxonomy" id="579405"/>
    <lineage>
        <taxon>Bacteria</taxon>
        <taxon>Pseudomonadati</taxon>
        <taxon>Pseudomonadota</taxon>
        <taxon>Gammaproteobacteria</taxon>
        <taxon>Enterobacterales</taxon>
        <taxon>Pectobacteriaceae</taxon>
        <taxon>Musicola</taxon>
    </lineage>
</organism>
<proteinExistence type="inferred from homology"/>
<gene>
    <name evidence="1" type="primary">pagP</name>
    <name type="ordered locus">Dd703_0182</name>
</gene>
<accession>C6C6T1</accession>
<reference key="1">
    <citation type="submission" date="2009-06" db="EMBL/GenBank/DDBJ databases">
        <title>Complete sequence of Dickeya dadantii Ech703.</title>
        <authorList>
            <consortium name="US DOE Joint Genome Institute"/>
            <person name="Lucas S."/>
            <person name="Copeland A."/>
            <person name="Lapidus A."/>
            <person name="Glavina del Rio T."/>
            <person name="Dalin E."/>
            <person name="Tice H."/>
            <person name="Bruce D."/>
            <person name="Goodwin L."/>
            <person name="Pitluck S."/>
            <person name="Chertkov O."/>
            <person name="Brettin T."/>
            <person name="Detter J.C."/>
            <person name="Han C."/>
            <person name="Larimer F."/>
            <person name="Land M."/>
            <person name="Hauser L."/>
            <person name="Kyrpides N."/>
            <person name="Mikhailova N."/>
            <person name="Balakrishnan V."/>
            <person name="Glasner J."/>
            <person name="Perna N.T."/>
        </authorList>
    </citation>
    <scope>NUCLEOTIDE SEQUENCE [LARGE SCALE GENOMIC DNA]</scope>
    <source>
        <strain>Ech703</strain>
    </source>
</reference>
<evidence type="ECO:0000255" key="1">
    <source>
        <dbReference type="HAMAP-Rule" id="MF_00837"/>
    </source>
</evidence>
<evidence type="ECO:0000305" key="2"/>
<protein>
    <recommendedName>
        <fullName evidence="1">Lipid A acyltransferase PagP</fullName>
        <ecNumber evidence="1">2.3.1.251</ecNumber>
    </recommendedName>
    <alternativeName>
        <fullName evidence="1">Lipid A acylation protein</fullName>
    </alternativeName>
</protein>
<dbReference type="EC" id="2.3.1.251" evidence="1"/>
<dbReference type="EMBL" id="CP001654">
    <property type="protein sequence ID" value="ACS84000.1"/>
    <property type="status" value="ALT_INIT"/>
    <property type="molecule type" value="Genomic_DNA"/>
</dbReference>
<dbReference type="RefSeq" id="WP_026595093.1">
    <property type="nucleotide sequence ID" value="NC_012880.1"/>
</dbReference>
<dbReference type="SMR" id="C6C6T1"/>
<dbReference type="STRING" id="579405.Dd703_0182"/>
<dbReference type="KEGG" id="dda:Dd703_0182"/>
<dbReference type="eggNOG" id="ENOG502Z7SY">
    <property type="taxonomic scope" value="Bacteria"/>
</dbReference>
<dbReference type="HOGENOM" id="CLU_104099_0_0_6"/>
<dbReference type="Proteomes" id="UP000002734">
    <property type="component" value="Chromosome"/>
</dbReference>
<dbReference type="GO" id="GO:0009279">
    <property type="term" value="C:cell outer membrane"/>
    <property type="evidence" value="ECO:0007669"/>
    <property type="project" value="UniProtKB-SubCell"/>
</dbReference>
<dbReference type="GO" id="GO:0016746">
    <property type="term" value="F:acyltransferase activity"/>
    <property type="evidence" value="ECO:0007669"/>
    <property type="project" value="UniProtKB-UniRule"/>
</dbReference>
<dbReference type="GO" id="GO:0009245">
    <property type="term" value="P:lipid A biosynthetic process"/>
    <property type="evidence" value="ECO:0007669"/>
    <property type="project" value="UniProtKB-UniRule"/>
</dbReference>
<dbReference type="FunFam" id="2.40.160.20:FF:000002">
    <property type="entry name" value="Lipid A palmitoyltransferase PagP"/>
    <property type="match status" value="1"/>
</dbReference>
<dbReference type="Gene3D" id="2.40.160.20">
    <property type="match status" value="1"/>
</dbReference>
<dbReference type="HAMAP" id="MF_00837">
    <property type="entry name" value="PagP_transferase"/>
    <property type="match status" value="1"/>
</dbReference>
<dbReference type="InterPro" id="IPR009746">
    <property type="entry name" value="LipidA_acyl_PagP"/>
</dbReference>
<dbReference type="InterPro" id="IPR011250">
    <property type="entry name" value="OMP/PagP_b-brl"/>
</dbReference>
<dbReference type="NCBIfam" id="NF008271">
    <property type="entry name" value="PRK11045.1"/>
    <property type="match status" value="1"/>
</dbReference>
<dbReference type="Pfam" id="PF07017">
    <property type="entry name" value="PagP"/>
    <property type="match status" value="1"/>
</dbReference>
<dbReference type="SUPFAM" id="SSF56925">
    <property type="entry name" value="OMPA-like"/>
    <property type="match status" value="1"/>
</dbReference>
<feature type="signal peptide" evidence="1">
    <location>
        <begin position="1"/>
        <end position="24"/>
    </location>
</feature>
<feature type="chain" id="PRO_0000414435" description="Lipid A acyltransferase PagP">
    <location>
        <begin position="25"/>
        <end position="192"/>
    </location>
</feature>
<feature type="active site" evidence="1">
    <location>
        <position position="63"/>
    </location>
</feature>
<feature type="active site" evidence="1">
    <location>
        <position position="106"/>
    </location>
</feature>
<feature type="active site" evidence="1">
    <location>
        <position position="107"/>
    </location>
</feature>
<feature type="site" description="Role in lipopolysaccharide recognition" evidence="1">
    <location>
        <position position="72"/>
    </location>
</feature>